<dbReference type="EC" id="5.2.1.8" evidence="1"/>
<dbReference type="EMBL" id="FM200053">
    <property type="protein sequence ID" value="CAR60327.1"/>
    <property type="molecule type" value="Genomic_DNA"/>
</dbReference>
<dbReference type="RefSeq" id="WP_001198403.1">
    <property type="nucleotide sequence ID" value="NC_011147.1"/>
</dbReference>
<dbReference type="SMR" id="B5BD84"/>
<dbReference type="KEGG" id="sek:SSPA2117"/>
<dbReference type="HOGENOM" id="CLU_033058_2_0_6"/>
<dbReference type="Proteomes" id="UP000001869">
    <property type="component" value="Chromosome"/>
</dbReference>
<dbReference type="GO" id="GO:0005737">
    <property type="term" value="C:cytoplasm"/>
    <property type="evidence" value="ECO:0007669"/>
    <property type="project" value="UniProtKB-SubCell"/>
</dbReference>
<dbReference type="GO" id="GO:0003755">
    <property type="term" value="F:peptidyl-prolyl cis-trans isomerase activity"/>
    <property type="evidence" value="ECO:0007669"/>
    <property type="project" value="UniProtKB-UniRule"/>
</dbReference>
<dbReference type="GO" id="GO:0044183">
    <property type="term" value="F:protein folding chaperone"/>
    <property type="evidence" value="ECO:0007669"/>
    <property type="project" value="TreeGrafter"/>
</dbReference>
<dbReference type="GO" id="GO:0043022">
    <property type="term" value="F:ribosome binding"/>
    <property type="evidence" value="ECO:0007669"/>
    <property type="project" value="TreeGrafter"/>
</dbReference>
<dbReference type="GO" id="GO:0051083">
    <property type="term" value="P:'de novo' cotranslational protein folding"/>
    <property type="evidence" value="ECO:0007669"/>
    <property type="project" value="TreeGrafter"/>
</dbReference>
<dbReference type="GO" id="GO:0051301">
    <property type="term" value="P:cell division"/>
    <property type="evidence" value="ECO:0007669"/>
    <property type="project" value="UniProtKB-KW"/>
</dbReference>
<dbReference type="GO" id="GO:0061077">
    <property type="term" value="P:chaperone-mediated protein folding"/>
    <property type="evidence" value="ECO:0007669"/>
    <property type="project" value="TreeGrafter"/>
</dbReference>
<dbReference type="GO" id="GO:0015031">
    <property type="term" value="P:protein transport"/>
    <property type="evidence" value="ECO:0007669"/>
    <property type="project" value="UniProtKB-UniRule"/>
</dbReference>
<dbReference type="GO" id="GO:0043335">
    <property type="term" value="P:protein unfolding"/>
    <property type="evidence" value="ECO:0007669"/>
    <property type="project" value="TreeGrafter"/>
</dbReference>
<dbReference type="FunFam" id="1.10.3120.10:FF:000001">
    <property type="entry name" value="Trigger factor"/>
    <property type="match status" value="1"/>
</dbReference>
<dbReference type="FunFam" id="3.10.50.40:FF:000001">
    <property type="entry name" value="Trigger factor"/>
    <property type="match status" value="1"/>
</dbReference>
<dbReference type="FunFam" id="3.30.70.1050:FF:000001">
    <property type="entry name" value="Trigger factor"/>
    <property type="match status" value="1"/>
</dbReference>
<dbReference type="Gene3D" id="3.10.50.40">
    <property type="match status" value="1"/>
</dbReference>
<dbReference type="Gene3D" id="3.30.70.1050">
    <property type="entry name" value="Trigger factor ribosome-binding domain"/>
    <property type="match status" value="1"/>
</dbReference>
<dbReference type="Gene3D" id="1.10.3120.10">
    <property type="entry name" value="Trigger factor, C-terminal domain"/>
    <property type="match status" value="1"/>
</dbReference>
<dbReference type="HAMAP" id="MF_00303">
    <property type="entry name" value="Trigger_factor_Tig"/>
    <property type="match status" value="1"/>
</dbReference>
<dbReference type="InterPro" id="IPR046357">
    <property type="entry name" value="PPIase_dom_sf"/>
</dbReference>
<dbReference type="InterPro" id="IPR001179">
    <property type="entry name" value="PPIase_FKBP_dom"/>
</dbReference>
<dbReference type="InterPro" id="IPR005215">
    <property type="entry name" value="Trig_fac"/>
</dbReference>
<dbReference type="InterPro" id="IPR008880">
    <property type="entry name" value="Trigger_fac_C"/>
</dbReference>
<dbReference type="InterPro" id="IPR037041">
    <property type="entry name" value="Trigger_fac_C_sf"/>
</dbReference>
<dbReference type="InterPro" id="IPR008881">
    <property type="entry name" value="Trigger_fac_ribosome-bd_bac"/>
</dbReference>
<dbReference type="InterPro" id="IPR036611">
    <property type="entry name" value="Trigger_fac_ribosome-bd_sf"/>
</dbReference>
<dbReference type="InterPro" id="IPR027304">
    <property type="entry name" value="Trigger_fact/SurA_dom_sf"/>
</dbReference>
<dbReference type="NCBIfam" id="TIGR00115">
    <property type="entry name" value="tig"/>
    <property type="match status" value="1"/>
</dbReference>
<dbReference type="PANTHER" id="PTHR30560">
    <property type="entry name" value="TRIGGER FACTOR CHAPERONE AND PEPTIDYL-PROLYL CIS/TRANS ISOMERASE"/>
    <property type="match status" value="1"/>
</dbReference>
<dbReference type="PANTHER" id="PTHR30560:SF3">
    <property type="entry name" value="TRIGGER FACTOR-LIKE PROTEIN TIG, CHLOROPLASTIC"/>
    <property type="match status" value="1"/>
</dbReference>
<dbReference type="Pfam" id="PF00254">
    <property type="entry name" value="FKBP_C"/>
    <property type="match status" value="1"/>
</dbReference>
<dbReference type="Pfam" id="PF05698">
    <property type="entry name" value="Trigger_C"/>
    <property type="match status" value="1"/>
</dbReference>
<dbReference type="Pfam" id="PF05697">
    <property type="entry name" value="Trigger_N"/>
    <property type="match status" value="1"/>
</dbReference>
<dbReference type="PIRSF" id="PIRSF003095">
    <property type="entry name" value="Trigger_factor"/>
    <property type="match status" value="1"/>
</dbReference>
<dbReference type="SUPFAM" id="SSF54534">
    <property type="entry name" value="FKBP-like"/>
    <property type="match status" value="1"/>
</dbReference>
<dbReference type="SUPFAM" id="SSF109998">
    <property type="entry name" value="Triger factor/SurA peptide-binding domain-like"/>
    <property type="match status" value="1"/>
</dbReference>
<dbReference type="SUPFAM" id="SSF102735">
    <property type="entry name" value="Trigger factor ribosome-binding domain"/>
    <property type="match status" value="1"/>
</dbReference>
<dbReference type="PROSITE" id="PS50059">
    <property type="entry name" value="FKBP_PPIASE"/>
    <property type="match status" value="1"/>
</dbReference>
<keyword id="KW-0131">Cell cycle</keyword>
<keyword id="KW-0132">Cell division</keyword>
<keyword id="KW-0143">Chaperone</keyword>
<keyword id="KW-0963">Cytoplasm</keyword>
<keyword id="KW-0413">Isomerase</keyword>
<keyword id="KW-0697">Rotamase</keyword>
<protein>
    <recommendedName>
        <fullName evidence="1">Trigger factor</fullName>
        <shortName evidence="1">TF</shortName>
        <ecNumber evidence="1">5.2.1.8</ecNumber>
    </recommendedName>
    <alternativeName>
        <fullName evidence="1">PPIase</fullName>
    </alternativeName>
</protein>
<comment type="function">
    <text evidence="1">Involved in protein export. Acts as a chaperone by maintaining the newly synthesized protein in an open conformation. Functions as a peptidyl-prolyl cis-trans isomerase.</text>
</comment>
<comment type="catalytic activity">
    <reaction evidence="1">
        <text>[protein]-peptidylproline (omega=180) = [protein]-peptidylproline (omega=0)</text>
        <dbReference type="Rhea" id="RHEA:16237"/>
        <dbReference type="Rhea" id="RHEA-COMP:10747"/>
        <dbReference type="Rhea" id="RHEA-COMP:10748"/>
        <dbReference type="ChEBI" id="CHEBI:83833"/>
        <dbReference type="ChEBI" id="CHEBI:83834"/>
        <dbReference type="EC" id="5.2.1.8"/>
    </reaction>
</comment>
<comment type="subcellular location">
    <subcellularLocation>
        <location>Cytoplasm</location>
    </subcellularLocation>
    <text evidence="1">About half TF is bound to the ribosome near the polypeptide exit tunnel while the other half is free in the cytoplasm.</text>
</comment>
<comment type="domain">
    <text evidence="1">Consists of 3 domains; the N-terminus binds the ribosome, the middle domain has PPIase activity, while the C-terminus has intrinsic chaperone activity on its own.</text>
</comment>
<comment type="similarity">
    <text evidence="1">Belongs to the FKBP-type PPIase family. Tig subfamily.</text>
</comment>
<evidence type="ECO:0000255" key="1">
    <source>
        <dbReference type="HAMAP-Rule" id="MF_00303"/>
    </source>
</evidence>
<organism>
    <name type="scientific">Salmonella paratyphi A (strain AKU_12601)</name>
    <dbReference type="NCBI Taxonomy" id="554290"/>
    <lineage>
        <taxon>Bacteria</taxon>
        <taxon>Pseudomonadati</taxon>
        <taxon>Pseudomonadota</taxon>
        <taxon>Gammaproteobacteria</taxon>
        <taxon>Enterobacterales</taxon>
        <taxon>Enterobacteriaceae</taxon>
        <taxon>Salmonella</taxon>
    </lineage>
</organism>
<gene>
    <name evidence="1" type="primary">tig</name>
    <name type="ordered locus">SSPA2117</name>
</gene>
<feature type="chain" id="PRO_1000115579" description="Trigger factor">
    <location>
        <begin position="1"/>
        <end position="432"/>
    </location>
</feature>
<feature type="domain" description="PPIase FKBP-type" evidence="1">
    <location>
        <begin position="161"/>
        <end position="246"/>
    </location>
</feature>
<name>TIG_SALPK</name>
<accession>B5BD84</accession>
<reference key="1">
    <citation type="journal article" date="2009" name="BMC Genomics">
        <title>Pseudogene accumulation in the evolutionary histories of Salmonella enterica serovars Paratyphi A and Typhi.</title>
        <authorList>
            <person name="Holt K.E."/>
            <person name="Thomson N.R."/>
            <person name="Wain J."/>
            <person name="Langridge G.C."/>
            <person name="Hasan R."/>
            <person name="Bhutta Z.A."/>
            <person name="Quail M.A."/>
            <person name="Norbertczak H."/>
            <person name="Walker D."/>
            <person name="Simmonds M."/>
            <person name="White B."/>
            <person name="Bason N."/>
            <person name="Mungall K."/>
            <person name="Dougan G."/>
            <person name="Parkhill J."/>
        </authorList>
    </citation>
    <scope>NUCLEOTIDE SEQUENCE [LARGE SCALE GENOMIC DNA]</scope>
    <source>
        <strain>AKU_12601</strain>
    </source>
</reference>
<proteinExistence type="inferred from homology"/>
<sequence>MQVSVETTQGLGRRVTITIAADSIETAVKSELVNVAKKVRIDGFRKGKVPMNIVAQRYGASVRQDVLGDLMSRNFVDAIIKEKINPAGAPNYVPGEYKVGEDFTYSVEFEVYPEVELTGLESIEVEKPVVEVTDADVDVMLDTLRKQQATWKEKDGAADAEDRVTIDFTGSVDGEEFEGGKATDFVLAMGQGRMIPGFEDGVKGHKAGEEFTIDVTFPEEYHAENLKGKAAKFVINLKKVEERELPELTEEFIKRFGVEDGSVAGLRAEVRKNMERELKGAVRNRVKSQAIEGLVKANDIDVPAALIDSEIDVLRRQAAQRFGGNEKQALELPRELFEEQAKRRVVVGLLLGEVIRTNELKADEERVKGLIEEMASAYEDPKEVIEFYSKNKELMDNMRNVALEEQAVEAVLAKAKVSEKATSFNELMNQQA</sequence>